<sequence length="110" mass="12268">MTKLRLTDPNLSNDDNQHWLTFVALLQDAIAQDLHLPLLQLMLTPDERTALGTRVRIIEELMRGELSQRELKNQLGAGIATITRGSNSLKAAPPQLKSWLEAQLLANKSS</sequence>
<protein>
    <recommendedName>
        <fullName evidence="1">Trp operon repressor</fullName>
    </recommendedName>
</protein>
<comment type="function">
    <text evidence="1">This protein is an aporepressor. When complexed with L-tryptophan it binds the operator region of the trp operon (5'-ACTAGT-'3') and prevents the initiation of transcription. The complex also regulates trp repressor biosynthesis by binding to its regulatory region.</text>
</comment>
<comment type="subunit">
    <text evidence="1">Homodimer.</text>
</comment>
<comment type="subcellular location">
    <subcellularLocation>
        <location evidence="1">Cytoplasm</location>
    </subcellularLocation>
</comment>
<comment type="similarity">
    <text evidence="1">Belongs to the TrpR family.</text>
</comment>
<keyword id="KW-0963">Cytoplasm</keyword>
<keyword id="KW-0238">DNA-binding</keyword>
<keyword id="KW-0678">Repressor</keyword>
<keyword id="KW-0804">Transcription</keyword>
<keyword id="KW-0805">Transcription regulation</keyword>
<name>TRPR_YERE8</name>
<organism>
    <name type="scientific">Yersinia enterocolitica serotype O:8 / biotype 1B (strain NCTC 13174 / 8081)</name>
    <dbReference type="NCBI Taxonomy" id="393305"/>
    <lineage>
        <taxon>Bacteria</taxon>
        <taxon>Pseudomonadati</taxon>
        <taxon>Pseudomonadota</taxon>
        <taxon>Gammaproteobacteria</taxon>
        <taxon>Enterobacterales</taxon>
        <taxon>Yersiniaceae</taxon>
        <taxon>Yersinia</taxon>
    </lineage>
</organism>
<evidence type="ECO:0000255" key="1">
    <source>
        <dbReference type="HAMAP-Rule" id="MF_00475"/>
    </source>
</evidence>
<gene>
    <name evidence="1" type="primary">trpR</name>
    <name type="ordered locus">YE0590</name>
</gene>
<feature type="chain" id="PRO_1000014054" description="Trp operon repressor">
    <location>
        <begin position="1"/>
        <end position="110"/>
    </location>
</feature>
<feature type="DNA-binding region" evidence="1">
    <location>
        <begin position="68"/>
        <end position="91"/>
    </location>
</feature>
<dbReference type="EMBL" id="AM286415">
    <property type="protein sequence ID" value="CAL10705.1"/>
    <property type="molecule type" value="Genomic_DNA"/>
</dbReference>
<dbReference type="RefSeq" id="WP_011815529.1">
    <property type="nucleotide sequence ID" value="NC_008800.1"/>
</dbReference>
<dbReference type="RefSeq" id="YP_001004945.1">
    <property type="nucleotide sequence ID" value="NC_008800.1"/>
</dbReference>
<dbReference type="SMR" id="A1JJB6"/>
<dbReference type="KEGG" id="yen:YE0590"/>
<dbReference type="PATRIC" id="fig|393305.7.peg.684"/>
<dbReference type="eggNOG" id="COG2973">
    <property type="taxonomic scope" value="Bacteria"/>
</dbReference>
<dbReference type="HOGENOM" id="CLU_147939_0_0_6"/>
<dbReference type="OrthoDB" id="5704033at2"/>
<dbReference type="Proteomes" id="UP000000642">
    <property type="component" value="Chromosome"/>
</dbReference>
<dbReference type="GO" id="GO:0005737">
    <property type="term" value="C:cytoplasm"/>
    <property type="evidence" value="ECO:0007669"/>
    <property type="project" value="UniProtKB-SubCell"/>
</dbReference>
<dbReference type="GO" id="GO:0003700">
    <property type="term" value="F:DNA-binding transcription factor activity"/>
    <property type="evidence" value="ECO:0007669"/>
    <property type="project" value="InterPro"/>
</dbReference>
<dbReference type="GO" id="GO:0043565">
    <property type="term" value="F:sequence-specific DNA binding"/>
    <property type="evidence" value="ECO:0007669"/>
    <property type="project" value="InterPro"/>
</dbReference>
<dbReference type="GO" id="GO:0045892">
    <property type="term" value="P:negative regulation of DNA-templated transcription"/>
    <property type="evidence" value="ECO:0007669"/>
    <property type="project" value="UniProtKB-UniRule"/>
</dbReference>
<dbReference type="FunFam" id="1.10.1270.10:FF:000001">
    <property type="entry name" value="Trp operon repressor"/>
    <property type="match status" value="1"/>
</dbReference>
<dbReference type="Gene3D" id="1.10.1270.10">
    <property type="entry name" value="TrpR-like"/>
    <property type="match status" value="1"/>
</dbReference>
<dbReference type="HAMAP" id="MF_00475">
    <property type="entry name" value="Trp_repressor"/>
    <property type="match status" value="1"/>
</dbReference>
<dbReference type="InterPro" id="IPR000831">
    <property type="entry name" value="Trp_repress"/>
</dbReference>
<dbReference type="InterPro" id="IPR013335">
    <property type="entry name" value="Trp_repress_bac"/>
</dbReference>
<dbReference type="InterPro" id="IPR010921">
    <property type="entry name" value="Trp_repressor/repl_initiator"/>
</dbReference>
<dbReference type="InterPro" id="IPR038116">
    <property type="entry name" value="TrpR-like_sf"/>
</dbReference>
<dbReference type="NCBIfam" id="TIGR01321">
    <property type="entry name" value="TrpR"/>
    <property type="match status" value="1"/>
</dbReference>
<dbReference type="PANTHER" id="PTHR38025">
    <property type="entry name" value="TRP OPERON REPRESSOR"/>
    <property type="match status" value="1"/>
</dbReference>
<dbReference type="PANTHER" id="PTHR38025:SF1">
    <property type="entry name" value="TRP OPERON REPRESSOR"/>
    <property type="match status" value="1"/>
</dbReference>
<dbReference type="Pfam" id="PF01371">
    <property type="entry name" value="Trp_repressor"/>
    <property type="match status" value="1"/>
</dbReference>
<dbReference type="PIRSF" id="PIRSF003196">
    <property type="entry name" value="Trp_repressor"/>
    <property type="match status" value="1"/>
</dbReference>
<dbReference type="SUPFAM" id="SSF48295">
    <property type="entry name" value="TrpR-like"/>
    <property type="match status" value="1"/>
</dbReference>
<reference key="1">
    <citation type="journal article" date="2006" name="PLoS Genet.">
        <title>The complete genome sequence and comparative genome analysis of the high pathogenicity Yersinia enterocolitica strain 8081.</title>
        <authorList>
            <person name="Thomson N.R."/>
            <person name="Howard S."/>
            <person name="Wren B.W."/>
            <person name="Holden M.T.G."/>
            <person name="Crossman L."/>
            <person name="Challis G.L."/>
            <person name="Churcher C."/>
            <person name="Mungall K."/>
            <person name="Brooks K."/>
            <person name="Chillingworth T."/>
            <person name="Feltwell T."/>
            <person name="Abdellah Z."/>
            <person name="Hauser H."/>
            <person name="Jagels K."/>
            <person name="Maddison M."/>
            <person name="Moule S."/>
            <person name="Sanders M."/>
            <person name="Whitehead S."/>
            <person name="Quail M.A."/>
            <person name="Dougan G."/>
            <person name="Parkhill J."/>
            <person name="Prentice M.B."/>
        </authorList>
    </citation>
    <scope>NUCLEOTIDE SEQUENCE [LARGE SCALE GENOMIC DNA]</scope>
    <source>
        <strain>NCTC 13174 / 8081</strain>
    </source>
</reference>
<proteinExistence type="inferred from homology"/>
<accession>A1JJB6</accession>